<comment type="function">
    <text evidence="1">Catalyzes the dephosphorylation of undecaprenyl diphosphate (UPP). Confers resistance to bacitracin.</text>
</comment>
<comment type="catalytic activity">
    <reaction evidence="1">
        <text>di-trans,octa-cis-undecaprenyl diphosphate + H2O = di-trans,octa-cis-undecaprenyl phosphate + phosphate + H(+)</text>
        <dbReference type="Rhea" id="RHEA:28094"/>
        <dbReference type="ChEBI" id="CHEBI:15377"/>
        <dbReference type="ChEBI" id="CHEBI:15378"/>
        <dbReference type="ChEBI" id="CHEBI:43474"/>
        <dbReference type="ChEBI" id="CHEBI:58405"/>
        <dbReference type="ChEBI" id="CHEBI:60392"/>
        <dbReference type="EC" id="3.6.1.27"/>
    </reaction>
</comment>
<comment type="subcellular location">
    <subcellularLocation>
        <location evidence="1">Cell inner membrane</location>
        <topology evidence="1">Multi-pass membrane protein</topology>
    </subcellularLocation>
</comment>
<comment type="miscellaneous">
    <text>Bacitracin is thought to be involved in the inhibition of peptidoglycan synthesis by sequestering undecaprenyl diphosphate, thereby reducing the pool of lipid carrier available.</text>
</comment>
<comment type="similarity">
    <text evidence="1">Belongs to the UppP family.</text>
</comment>
<dbReference type="EC" id="3.6.1.27" evidence="1"/>
<dbReference type="EMBL" id="CP000934">
    <property type="protein sequence ID" value="ACE85837.1"/>
    <property type="molecule type" value="Genomic_DNA"/>
</dbReference>
<dbReference type="RefSeq" id="WP_012486079.1">
    <property type="nucleotide sequence ID" value="NC_010995.1"/>
</dbReference>
<dbReference type="SMR" id="B3PI58"/>
<dbReference type="STRING" id="498211.CJA_0397"/>
<dbReference type="KEGG" id="cja:CJA_0397"/>
<dbReference type="eggNOG" id="COG1968">
    <property type="taxonomic scope" value="Bacteria"/>
</dbReference>
<dbReference type="HOGENOM" id="CLU_060296_2_0_6"/>
<dbReference type="OrthoDB" id="9808289at2"/>
<dbReference type="Proteomes" id="UP000001036">
    <property type="component" value="Chromosome"/>
</dbReference>
<dbReference type="GO" id="GO:0005886">
    <property type="term" value="C:plasma membrane"/>
    <property type="evidence" value="ECO:0007669"/>
    <property type="project" value="UniProtKB-SubCell"/>
</dbReference>
<dbReference type="GO" id="GO:0050380">
    <property type="term" value="F:undecaprenyl-diphosphatase activity"/>
    <property type="evidence" value="ECO:0007669"/>
    <property type="project" value="UniProtKB-UniRule"/>
</dbReference>
<dbReference type="GO" id="GO:0071555">
    <property type="term" value="P:cell wall organization"/>
    <property type="evidence" value="ECO:0007669"/>
    <property type="project" value="UniProtKB-KW"/>
</dbReference>
<dbReference type="GO" id="GO:0009252">
    <property type="term" value="P:peptidoglycan biosynthetic process"/>
    <property type="evidence" value="ECO:0007669"/>
    <property type="project" value="UniProtKB-KW"/>
</dbReference>
<dbReference type="GO" id="GO:0008360">
    <property type="term" value="P:regulation of cell shape"/>
    <property type="evidence" value="ECO:0007669"/>
    <property type="project" value="UniProtKB-KW"/>
</dbReference>
<dbReference type="GO" id="GO:0046677">
    <property type="term" value="P:response to antibiotic"/>
    <property type="evidence" value="ECO:0007669"/>
    <property type="project" value="UniProtKB-UniRule"/>
</dbReference>
<dbReference type="HAMAP" id="MF_01006">
    <property type="entry name" value="Undec_diphosphatase"/>
    <property type="match status" value="1"/>
</dbReference>
<dbReference type="InterPro" id="IPR003824">
    <property type="entry name" value="UppP"/>
</dbReference>
<dbReference type="NCBIfam" id="NF001389">
    <property type="entry name" value="PRK00281.1-2"/>
    <property type="match status" value="1"/>
</dbReference>
<dbReference type="NCBIfam" id="NF001390">
    <property type="entry name" value="PRK00281.1-4"/>
    <property type="match status" value="1"/>
</dbReference>
<dbReference type="NCBIfam" id="TIGR00753">
    <property type="entry name" value="undec_PP_bacA"/>
    <property type="match status" value="1"/>
</dbReference>
<dbReference type="PANTHER" id="PTHR30622">
    <property type="entry name" value="UNDECAPRENYL-DIPHOSPHATASE"/>
    <property type="match status" value="1"/>
</dbReference>
<dbReference type="PANTHER" id="PTHR30622:SF3">
    <property type="entry name" value="UNDECAPRENYL-DIPHOSPHATASE"/>
    <property type="match status" value="1"/>
</dbReference>
<dbReference type="Pfam" id="PF02673">
    <property type="entry name" value="BacA"/>
    <property type="match status" value="1"/>
</dbReference>
<reference key="1">
    <citation type="journal article" date="2008" name="J. Bacteriol.">
        <title>Insights into plant cell wall degradation from the genome sequence of the soil bacterium Cellvibrio japonicus.</title>
        <authorList>
            <person name="DeBoy R.T."/>
            <person name="Mongodin E.F."/>
            <person name="Fouts D.E."/>
            <person name="Tailford L.E."/>
            <person name="Khouri H."/>
            <person name="Emerson J.B."/>
            <person name="Mohamoud Y."/>
            <person name="Watkins K."/>
            <person name="Henrissat B."/>
            <person name="Gilbert H.J."/>
            <person name="Nelson K.E."/>
        </authorList>
    </citation>
    <scope>NUCLEOTIDE SEQUENCE [LARGE SCALE GENOMIC DNA]</scope>
    <source>
        <strain>Ueda107</strain>
    </source>
</reference>
<name>UPPP_CELJU</name>
<organism>
    <name type="scientific">Cellvibrio japonicus (strain Ueda107)</name>
    <name type="common">Pseudomonas fluorescens subsp. cellulosa</name>
    <dbReference type="NCBI Taxonomy" id="498211"/>
    <lineage>
        <taxon>Bacteria</taxon>
        <taxon>Pseudomonadati</taxon>
        <taxon>Pseudomonadota</taxon>
        <taxon>Gammaproteobacteria</taxon>
        <taxon>Cellvibrionales</taxon>
        <taxon>Cellvibrionaceae</taxon>
        <taxon>Cellvibrio</taxon>
    </lineage>
</organism>
<feature type="chain" id="PRO_1000197355" description="Undecaprenyl-diphosphatase">
    <location>
        <begin position="1"/>
        <end position="274"/>
    </location>
</feature>
<feature type="transmembrane region" description="Helical" evidence="1">
    <location>
        <begin position="4"/>
        <end position="24"/>
    </location>
</feature>
<feature type="transmembrane region" description="Helical" evidence="1">
    <location>
        <begin position="46"/>
        <end position="66"/>
    </location>
</feature>
<feature type="transmembrane region" description="Helical" evidence="1">
    <location>
        <begin position="86"/>
        <end position="106"/>
    </location>
</feature>
<feature type="transmembrane region" description="Helical" evidence="1">
    <location>
        <begin position="109"/>
        <end position="129"/>
    </location>
</feature>
<feature type="transmembrane region" description="Helical" evidence="1">
    <location>
        <begin position="145"/>
        <end position="165"/>
    </location>
</feature>
<feature type="transmembrane region" description="Helical" evidence="1">
    <location>
        <begin position="188"/>
        <end position="208"/>
    </location>
</feature>
<feature type="transmembrane region" description="Helical" evidence="1">
    <location>
        <begin position="214"/>
        <end position="234"/>
    </location>
</feature>
<feature type="transmembrane region" description="Helical" evidence="1">
    <location>
        <begin position="250"/>
        <end position="270"/>
    </location>
</feature>
<sequence>MDLLLVIKAIIMGIVEGITELLPISSTGHLILAADVMNFLSHDKRVVFEIFIQMGAMLAIVWEYRVKIFSSLAGAVRPGIERNLFINVAIAFFPAALVGFLFSDFIRTVLFSPYVVAGGFIVGGVIIMWVEKYAYAPRLDDMDRISYADAFNVGLCQCLALIPGTSRSGATIIGGMYFGLSRRASTEFSFFLAIPMIGAASLYALWEAREQMEIEDMGILAIGFITSFFVTFAVMRALLRFVSKHTYMAFAWYRIAFGLLVLATAYTGVINWSV</sequence>
<gene>
    <name evidence="1" type="primary">uppP</name>
    <name type="ordered locus">CJA_0397</name>
</gene>
<protein>
    <recommendedName>
        <fullName evidence="1">Undecaprenyl-diphosphatase</fullName>
        <ecNumber evidence="1">3.6.1.27</ecNumber>
    </recommendedName>
    <alternativeName>
        <fullName evidence="1">Bacitracin resistance protein</fullName>
    </alternativeName>
    <alternativeName>
        <fullName evidence="1">Undecaprenyl pyrophosphate phosphatase</fullName>
    </alternativeName>
</protein>
<accession>B3PI58</accession>
<keyword id="KW-0046">Antibiotic resistance</keyword>
<keyword id="KW-0997">Cell inner membrane</keyword>
<keyword id="KW-1003">Cell membrane</keyword>
<keyword id="KW-0133">Cell shape</keyword>
<keyword id="KW-0961">Cell wall biogenesis/degradation</keyword>
<keyword id="KW-0378">Hydrolase</keyword>
<keyword id="KW-0472">Membrane</keyword>
<keyword id="KW-0573">Peptidoglycan synthesis</keyword>
<keyword id="KW-1185">Reference proteome</keyword>
<keyword id="KW-0812">Transmembrane</keyword>
<keyword id="KW-1133">Transmembrane helix</keyword>
<evidence type="ECO:0000255" key="1">
    <source>
        <dbReference type="HAMAP-Rule" id="MF_01006"/>
    </source>
</evidence>
<proteinExistence type="inferred from homology"/>